<organism>
    <name type="scientific">Rhinoceros unicornis</name>
    <name type="common">Greater Indian rhinoceros</name>
    <dbReference type="NCBI Taxonomy" id="9809"/>
    <lineage>
        <taxon>Eukaryota</taxon>
        <taxon>Metazoa</taxon>
        <taxon>Chordata</taxon>
        <taxon>Craniata</taxon>
        <taxon>Vertebrata</taxon>
        <taxon>Euteleostomi</taxon>
        <taxon>Mammalia</taxon>
        <taxon>Eutheria</taxon>
        <taxon>Laurasiatheria</taxon>
        <taxon>Perissodactyla</taxon>
        <taxon>Rhinocerotidae</taxon>
        <taxon>Rhinoceros</taxon>
    </lineage>
</organism>
<feature type="signal peptide" evidence="1">
    <location>
        <begin position="1"/>
        <end position="22"/>
    </location>
</feature>
<feature type="chain" id="PRO_0000018896" description="Hereditary hemochromatosis protein homolog">
    <location>
        <begin position="23"/>
        <end position="348"/>
    </location>
</feature>
<feature type="topological domain" description="Extracellular" evidence="2">
    <location>
        <begin position="23"/>
        <end position="306"/>
    </location>
</feature>
<feature type="transmembrane region" description="Helical" evidence="3">
    <location>
        <begin position="307"/>
        <end position="330"/>
    </location>
</feature>
<feature type="topological domain" description="Cytoplasmic" evidence="2">
    <location>
        <begin position="331"/>
        <end position="348"/>
    </location>
</feature>
<feature type="domain" description="Ig-like C1-type">
    <location>
        <begin position="207"/>
        <end position="296"/>
    </location>
</feature>
<feature type="region of interest" description="Alpha-1">
    <location>
        <begin position="23"/>
        <end position="114"/>
    </location>
</feature>
<feature type="region of interest" description="Alpha-2">
    <location>
        <begin position="115"/>
        <end position="205"/>
    </location>
</feature>
<feature type="region of interest" description="Alpha-3">
    <location>
        <begin position="206"/>
        <end position="297"/>
    </location>
</feature>
<feature type="region of interest" description="Connecting peptide">
    <location>
        <begin position="298"/>
        <end position="306"/>
    </location>
</feature>
<feature type="glycosylation site" description="N-linked (GlcNAc...) asparagine" evidence="3">
    <location>
        <position position="110"/>
    </location>
</feature>
<feature type="glycosylation site" description="N-linked (GlcNAc...) asparagine" evidence="3">
    <location>
        <position position="130"/>
    </location>
</feature>
<feature type="glycosylation site" description="N-linked (GlcNAc...) asparagine" evidence="3">
    <location>
        <position position="234"/>
    </location>
</feature>
<feature type="disulfide bond" evidence="4">
    <location>
        <begin position="124"/>
        <end position="187"/>
    </location>
</feature>
<feature type="disulfide bond" evidence="4">
    <location>
        <begin position="225"/>
        <end position="282"/>
    </location>
</feature>
<dbReference type="EMBL" id="AY007544">
    <property type="protein sequence ID" value="AAG23704.1"/>
    <property type="molecule type" value="mRNA"/>
</dbReference>
<dbReference type="SMR" id="Q9GL41"/>
<dbReference type="GlyCosmos" id="Q9GL41">
    <property type="glycosylation" value="3 sites, No reported glycans"/>
</dbReference>
<dbReference type="GO" id="GO:0009897">
    <property type="term" value="C:external side of plasma membrane"/>
    <property type="evidence" value="ECO:0007669"/>
    <property type="project" value="TreeGrafter"/>
</dbReference>
<dbReference type="GO" id="GO:0005615">
    <property type="term" value="C:extracellular space"/>
    <property type="evidence" value="ECO:0007669"/>
    <property type="project" value="TreeGrafter"/>
</dbReference>
<dbReference type="GO" id="GO:1990459">
    <property type="term" value="F:transferrin receptor binding"/>
    <property type="evidence" value="ECO:0007669"/>
    <property type="project" value="TreeGrafter"/>
</dbReference>
<dbReference type="GO" id="GO:0006826">
    <property type="term" value="P:iron ion transport"/>
    <property type="evidence" value="ECO:0007669"/>
    <property type="project" value="UniProtKB-KW"/>
</dbReference>
<dbReference type="GO" id="GO:0034756">
    <property type="term" value="P:regulation of iron ion transport"/>
    <property type="evidence" value="ECO:0007669"/>
    <property type="project" value="TreeGrafter"/>
</dbReference>
<dbReference type="GO" id="GO:1990641">
    <property type="term" value="P:response to iron ion starvation"/>
    <property type="evidence" value="ECO:0007669"/>
    <property type="project" value="TreeGrafter"/>
</dbReference>
<dbReference type="FunFam" id="3.30.500.10:FF:000001">
    <property type="entry name" value="H-2 class I histocompatibility antigen, alpha chain"/>
    <property type="match status" value="1"/>
</dbReference>
<dbReference type="FunFam" id="2.60.40.10:FF:000204">
    <property type="entry name" value="Major histocompatibility complex, class I-related protein"/>
    <property type="match status" value="1"/>
</dbReference>
<dbReference type="Gene3D" id="2.60.40.10">
    <property type="entry name" value="Immunoglobulins"/>
    <property type="match status" value="1"/>
</dbReference>
<dbReference type="Gene3D" id="3.30.500.10">
    <property type="entry name" value="MHC class I-like antigen recognition-like"/>
    <property type="match status" value="1"/>
</dbReference>
<dbReference type="InterPro" id="IPR007110">
    <property type="entry name" value="Ig-like_dom"/>
</dbReference>
<dbReference type="InterPro" id="IPR036179">
    <property type="entry name" value="Ig-like_dom_sf"/>
</dbReference>
<dbReference type="InterPro" id="IPR013783">
    <property type="entry name" value="Ig-like_fold"/>
</dbReference>
<dbReference type="InterPro" id="IPR003006">
    <property type="entry name" value="Ig/MHC_CS"/>
</dbReference>
<dbReference type="InterPro" id="IPR003597">
    <property type="entry name" value="Ig_C1-set"/>
</dbReference>
<dbReference type="InterPro" id="IPR050208">
    <property type="entry name" value="MHC_class-I_related"/>
</dbReference>
<dbReference type="InterPro" id="IPR011161">
    <property type="entry name" value="MHC_I-like_Ag-recog"/>
</dbReference>
<dbReference type="InterPro" id="IPR037055">
    <property type="entry name" value="MHC_I-like_Ag-recog_sf"/>
</dbReference>
<dbReference type="InterPro" id="IPR011162">
    <property type="entry name" value="MHC_I/II-like_Ag-recog"/>
</dbReference>
<dbReference type="InterPro" id="IPR001039">
    <property type="entry name" value="MHC_I_a_a1/a2"/>
</dbReference>
<dbReference type="PANTHER" id="PTHR16675:SF172">
    <property type="entry name" value="HEREDITARY HEMOCHROMATOSIS PROTEIN"/>
    <property type="match status" value="1"/>
</dbReference>
<dbReference type="PANTHER" id="PTHR16675">
    <property type="entry name" value="MHC CLASS I-RELATED"/>
    <property type="match status" value="1"/>
</dbReference>
<dbReference type="Pfam" id="PF07654">
    <property type="entry name" value="C1-set"/>
    <property type="match status" value="1"/>
</dbReference>
<dbReference type="Pfam" id="PF00129">
    <property type="entry name" value="MHC_I"/>
    <property type="match status" value="1"/>
</dbReference>
<dbReference type="PRINTS" id="PR01638">
    <property type="entry name" value="MHCCLASSI"/>
</dbReference>
<dbReference type="SMART" id="SM00407">
    <property type="entry name" value="IGc1"/>
    <property type="match status" value="1"/>
</dbReference>
<dbReference type="SUPFAM" id="SSF48726">
    <property type="entry name" value="Immunoglobulin"/>
    <property type="match status" value="1"/>
</dbReference>
<dbReference type="SUPFAM" id="SSF54452">
    <property type="entry name" value="MHC antigen-recognition domain"/>
    <property type="match status" value="1"/>
</dbReference>
<dbReference type="PROSITE" id="PS50835">
    <property type="entry name" value="IG_LIKE"/>
    <property type="match status" value="1"/>
</dbReference>
<dbReference type="PROSITE" id="PS00290">
    <property type="entry name" value="IG_MHC"/>
    <property type="match status" value="1"/>
</dbReference>
<name>HFE_RHIUN</name>
<protein>
    <recommendedName>
        <fullName>Hereditary hemochromatosis protein homolog</fullName>
    </recommendedName>
</protein>
<keyword id="KW-1003">Cell membrane</keyword>
<keyword id="KW-1015">Disulfide bond</keyword>
<keyword id="KW-0325">Glycoprotein</keyword>
<keyword id="KW-0406">Ion transport</keyword>
<keyword id="KW-0408">Iron</keyword>
<keyword id="KW-0410">Iron transport</keyword>
<keyword id="KW-0472">Membrane</keyword>
<keyword id="KW-0732">Signal</keyword>
<keyword id="KW-0812">Transmembrane</keyword>
<keyword id="KW-1133">Transmembrane helix</keyword>
<keyword id="KW-0813">Transport</keyword>
<reference key="1">
    <citation type="submission" date="2000-08" db="EMBL/GenBank/DDBJ databases">
        <title>Rhinoceros HFE polymorphisms.</title>
        <authorList>
            <person name="West C.J."/>
            <person name="Worley M."/>
            <person name="Beutler E."/>
        </authorList>
    </citation>
    <scope>NUCLEOTIDE SEQUENCE [MRNA]</scope>
</reference>
<comment type="function">
    <text evidence="2">Binds to transferrin receptor (TFR) and reduces its affinity for iron-loaded transferrin.</text>
</comment>
<comment type="subunit">
    <text evidence="2">Binds TFR through the extracellular domain in a pH-dependent manner.</text>
</comment>
<comment type="subcellular location">
    <subcellularLocation>
        <location evidence="2">Cell membrane</location>
        <topology evidence="2">Single-pass type I membrane protein</topology>
    </subcellularLocation>
</comment>
<comment type="similarity">
    <text evidence="5">Belongs to the MHC class I family.</text>
</comment>
<accession>Q9GL41</accession>
<sequence>MGPRARPALFFLILLRTVAAQGRPPRSHSLRYLFMGASERDHGLPLFEALGYVDDELFVAYNHESRRAESRAQWVLGEAHSQLWLQLSQSLKGWDHMFIVDFWTIMDNHNHSKESHTLQVILGCEVQEDNSTRGFWMYGYDGQDHLEFCPETLDWRAAESRALTTKLEWEVNKIRAKQNRAYLERDCPEQLQWLLELGRGVLDQQVPPLVKVTHHVASAVTTLRCQALNFYPQNITMRWLKDRKPVDVKDAESKDVLPSGDGTYQSWVALAVPPGEEQRYTCQVEHPGLDQPLTATWEPSLSNTLVTGVISGIAVCVIIFLIGILFRILRKRQASRGAMGDYVLAECE</sequence>
<proteinExistence type="evidence at transcript level"/>
<gene>
    <name type="primary">HFE</name>
</gene>
<evidence type="ECO:0000250" key="1"/>
<evidence type="ECO:0000250" key="2">
    <source>
        <dbReference type="UniProtKB" id="Q30201"/>
    </source>
</evidence>
<evidence type="ECO:0000255" key="3"/>
<evidence type="ECO:0000255" key="4">
    <source>
        <dbReference type="PROSITE-ProRule" id="PRU00114"/>
    </source>
</evidence>
<evidence type="ECO:0000305" key="5"/>